<keyword id="KW-0027">Amidation</keyword>
<keyword id="KW-0903">Direct protein sequencing</keyword>
<keyword id="KW-0527">Neuropeptide</keyword>
<keyword id="KW-0964">Secreted</keyword>
<dbReference type="GO" id="GO:0005576">
    <property type="term" value="C:extracellular region"/>
    <property type="evidence" value="ECO:0000250"/>
    <property type="project" value="UniProtKB"/>
</dbReference>
<dbReference type="GO" id="GO:0007218">
    <property type="term" value="P:neuropeptide signaling pathway"/>
    <property type="evidence" value="ECO:0007669"/>
    <property type="project" value="UniProtKB-KW"/>
</dbReference>
<dbReference type="GO" id="GO:0006940">
    <property type="term" value="P:regulation of smooth muscle contraction"/>
    <property type="evidence" value="ECO:0000250"/>
    <property type="project" value="UniProtKB"/>
</dbReference>
<accession>P85043</accession>
<reference evidence="4" key="1">
    <citation type="journal article" date="2005" name="Biochem. Biophys. Res. Commun.">
        <title>Identification of tick periviscerokinin, the first neurohormone of Ixodidae: single cell analysis by means of MALDI-TOF/TOF mass spectrometry.</title>
        <authorList>
            <person name="Neupert S."/>
            <person name="Predel R."/>
            <person name="Russell W.K."/>
            <person name="Davies R."/>
            <person name="Pietrantonio P.V."/>
            <person name="Nachman R.J."/>
        </authorList>
    </citation>
    <scope>PROTEIN SEQUENCE</scope>
    <scope>AMIDATION AT VAL-9</scope>
    <scope>MASS SPECTROMETRY</scope>
    <source>
        <tissue evidence="3">Neurosecretory cell</tissue>
    </source>
</reference>
<feature type="peptide" id="PRO_0000271184" description="Periviscerokinin" evidence="3">
    <location>
        <begin position="1"/>
        <end position="9"/>
    </location>
</feature>
<feature type="modified residue" description="Valine amide" evidence="3">
    <location>
        <position position="9"/>
    </location>
</feature>
<name>PVK_IXORI</name>
<evidence type="ECO:0000250" key="1">
    <source>
        <dbReference type="UniProtKB" id="P83931"/>
    </source>
</evidence>
<evidence type="ECO:0000255" key="2"/>
<evidence type="ECO:0000269" key="3">
    <source>
    </source>
</evidence>
<evidence type="ECO:0000305" key="4"/>
<proteinExistence type="evidence at protein level"/>
<organism>
    <name type="scientific">Ixodes ricinus</name>
    <name type="common">Common tick</name>
    <name type="synonym">Acarus ricinus</name>
    <dbReference type="NCBI Taxonomy" id="34613"/>
    <lineage>
        <taxon>Eukaryota</taxon>
        <taxon>Metazoa</taxon>
        <taxon>Ecdysozoa</taxon>
        <taxon>Arthropoda</taxon>
        <taxon>Chelicerata</taxon>
        <taxon>Arachnida</taxon>
        <taxon>Acari</taxon>
        <taxon>Parasitiformes</taxon>
        <taxon>Ixodida</taxon>
        <taxon>Ixodoidea</taxon>
        <taxon>Ixodidae</taxon>
        <taxon>Ixodinae</taxon>
        <taxon>Ixodes</taxon>
    </lineage>
</organism>
<protein>
    <recommendedName>
        <fullName>Periviscerokinin</fullName>
    </recommendedName>
</protein>
<comment type="function">
    <text evidence="1">Mediates visceral muscle contractile activity (myotropic activity).</text>
</comment>
<comment type="subcellular location">
    <subcellularLocation>
        <location>Secreted</location>
    </subcellularLocation>
</comment>
<comment type="mass spectrometry"/>
<comment type="similarity">
    <text evidence="2">Belongs to the periviscerokinin family.</text>
</comment>
<sequence>PALIPFPRV</sequence>